<accession>B3NUC9</accession>
<protein>
    <recommendedName>
        <fullName>Ubiquitin-like modifier-activating enzyme 5</fullName>
        <shortName>Ubiquitin-activating enzyme 5</shortName>
    </recommendedName>
</protein>
<dbReference type="EMBL" id="CH954180">
    <property type="protein sequence ID" value="EDV46044.1"/>
    <property type="molecule type" value="Genomic_DNA"/>
</dbReference>
<dbReference type="SMR" id="B3NUC9"/>
<dbReference type="EnsemblMetazoa" id="FBtr0138476">
    <property type="protein sequence ID" value="FBpp0136968"/>
    <property type="gene ID" value="FBgn0110637"/>
</dbReference>
<dbReference type="EnsemblMetazoa" id="XM_001977081.3">
    <property type="protein sequence ID" value="XP_001977117.1"/>
    <property type="gene ID" value="LOC6551372"/>
</dbReference>
<dbReference type="GeneID" id="6551372"/>
<dbReference type="KEGG" id="der:6551372"/>
<dbReference type="CTD" id="79876"/>
<dbReference type="eggNOG" id="KOG2336">
    <property type="taxonomic scope" value="Eukaryota"/>
</dbReference>
<dbReference type="HOGENOM" id="CLU_013325_0_1_1"/>
<dbReference type="OMA" id="MNIVKDY"/>
<dbReference type="OrthoDB" id="206053at2759"/>
<dbReference type="PhylomeDB" id="B3NUC9"/>
<dbReference type="Proteomes" id="UP000008711">
    <property type="component" value="Unassembled WGS sequence"/>
</dbReference>
<dbReference type="GO" id="GO:0005829">
    <property type="term" value="C:cytosol"/>
    <property type="evidence" value="ECO:0007669"/>
    <property type="project" value="TreeGrafter"/>
</dbReference>
<dbReference type="GO" id="GO:0005524">
    <property type="term" value="F:ATP binding"/>
    <property type="evidence" value="ECO:0007669"/>
    <property type="project" value="UniProtKB-KW"/>
</dbReference>
<dbReference type="GO" id="GO:0046872">
    <property type="term" value="F:metal ion binding"/>
    <property type="evidence" value="ECO:0007669"/>
    <property type="project" value="UniProtKB-KW"/>
</dbReference>
<dbReference type="GO" id="GO:0071566">
    <property type="term" value="F:UFM1 activating enzyme activity"/>
    <property type="evidence" value="ECO:0007669"/>
    <property type="project" value="TreeGrafter"/>
</dbReference>
<dbReference type="GO" id="GO:0050905">
    <property type="term" value="P:neuromuscular process"/>
    <property type="evidence" value="ECO:0007669"/>
    <property type="project" value="EnsemblMetazoa"/>
</dbReference>
<dbReference type="GO" id="GO:0071569">
    <property type="term" value="P:protein ufmylation"/>
    <property type="evidence" value="ECO:0007669"/>
    <property type="project" value="TreeGrafter"/>
</dbReference>
<dbReference type="CDD" id="cd00757">
    <property type="entry name" value="ThiF_MoeB_HesA_family"/>
    <property type="match status" value="1"/>
</dbReference>
<dbReference type="FunFam" id="3.40.50.720:FF:000066">
    <property type="entry name" value="Putative ubiquitin-like modifier-activating enzyme 5"/>
    <property type="match status" value="1"/>
</dbReference>
<dbReference type="Gene3D" id="3.40.50.720">
    <property type="entry name" value="NAD(P)-binding Rossmann-like Domain"/>
    <property type="match status" value="1"/>
</dbReference>
<dbReference type="InterPro" id="IPR029752">
    <property type="entry name" value="D-isomer_DH_CS1"/>
</dbReference>
<dbReference type="InterPro" id="IPR045886">
    <property type="entry name" value="ThiF/MoeB/HesA"/>
</dbReference>
<dbReference type="InterPro" id="IPR000594">
    <property type="entry name" value="ThiF_NAD_FAD-bd"/>
</dbReference>
<dbReference type="InterPro" id="IPR035985">
    <property type="entry name" value="Ubiquitin-activating_enz"/>
</dbReference>
<dbReference type="PANTHER" id="PTHR10953">
    <property type="entry name" value="UBIQUITIN-ACTIVATING ENZYME E1"/>
    <property type="match status" value="1"/>
</dbReference>
<dbReference type="PANTHER" id="PTHR10953:SF9">
    <property type="entry name" value="UBIQUITIN-LIKE MODIFIER-ACTIVATING ENZYME 5"/>
    <property type="match status" value="1"/>
</dbReference>
<dbReference type="Pfam" id="PF00899">
    <property type="entry name" value="ThiF"/>
    <property type="match status" value="1"/>
</dbReference>
<dbReference type="SUPFAM" id="SSF69572">
    <property type="entry name" value="Activating enzymes of the ubiquitin-like proteins"/>
    <property type="match status" value="1"/>
</dbReference>
<gene>
    <name type="ORF">GG18422</name>
</gene>
<comment type="function">
    <text evidence="1">E1-like enzyme which activates UFM1.</text>
</comment>
<comment type="similarity">
    <text evidence="3">Belongs to the ubiquitin-activating E1 family. UBA5 subfamily.</text>
</comment>
<evidence type="ECO:0000250" key="1"/>
<evidence type="ECO:0000256" key="2">
    <source>
        <dbReference type="SAM" id="MobiDB-lite"/>
    </source>
</evidence>
<evidence type="ECO:0000305" key="3"/>
<keyword id="KW-0067">ATP-binding</keyword>
<keyword id="KW-0479">Metal-binding</keyword>
<keyword id="KW-0547">Nucleotide-binding</keyword>
<keyword id="KW-0833">Ubl conjugation pathway</keyword>
<keyword id="KW-0862">Zinc</keyword>
<feature type="chain" id="PRO_0000391942" description="Ubiquitin-like modifier-activating enzyme 5">
    <location>
        <begin position="1"/>
        <end position="402"/>
    </location>
</feature>
<feature type="region of interest" description="Disordered" evidence="2">
    <location>
        <begin position="369"/>
        <end position="402"/>
    </location>
</feature>
<feature type="active site" description="Glycyl thioester intermediate" evidence="1">
    <location>
        <position position="248"/>
    </location>
</feature>
<feature type="binding site" evidence="1">
    <location>
        <position position="81"/>
    </location>
    <ligand>
        <name>ATP</name>
        <dbReference type="ChEBI" id="CHEBI:30616"/>
    </ligand>
</feature>
<feature type="binding site" evidence="1">
    <location>
        <position position="102"/>
    </location>
    <ligand>
        <name>ATP</name>
        <dbReference type="ChEBI" id="CHEBI:30616"/>
    </ligand>
</feature>
<feature type="binding site" evidence="1">
    <location>
        <position position="125"/>
    </location>
    <ligand>
        <name>ATP</name>
        <dbReference type="ChEBI" id="CHEBI:30616"/>
    </ligand>
</feature>
<feature type="binding site" evidence="1">
    <location>
        <position position="148"/>
    </location>
    <ligand>
        <name>ATP</name>
        <dbReference type="ChEBI" id="CHEBI:30616"/>
    </ligand>
</feature>
<feature type="binding site" evidence="1">
    <location>
        <position position="182"/>
    </location>
    <ligand>
        <name>ATP</name>
        <dbReference type="ChEBI" id="CHEBI:30616"/>
    </ligand>
</feature>
<feature type="binding site" evidence="1">
    <location>
        <position position="224"/>
    </location>
    <ligand>
        <name>Zn(2+)</name>
        <dbReference type="ChEBI" id="CHEBI:29105"/>
    </ligand>
</feature>
<feature type="binding site" evidence="1">
    <location>
        <position position="227"/>
    </location>
    <ligand>
        <name>Zn(2+)</name>
        <dbReference type="ChEBI" id="CHEBI:29105"/>
    </ligand>
</feature>
<feature type="binding site" evidence="1">
    <location>
        <position position="301"/>
    </location>
    <ligand>
        <name>Zn(2+)</name>
        <dbReference type="ChEBI" id="CHEBI:29105"/>
    </ligand>
</feature>
<feature type="binding site" evidence="1">
    <location>
        <position position="306"/>
    </location>
    <ligand>
        <name>Zn(2+)</name>
        <dbReference type="ChEBI" id="CHEBI:29105"/>
    </ligand>
</feature>
<sequence length="402" mass="43979">MPYAIDELQEIIGNLRTELVEPIDSGGVNNTRLGRDRVERMSAEVVDSNPYSRLMALQRMNIVKDYERIRDKAVAIVGVGGVGSVTADMLTRCGIGKLILFDYDKVELANMNRLFFTPNQAGLSKVAAAGATLNFINPDVEIEMFNFNITTVDNFDRFLNAISQGGRIAGQPVDLVLSCVDNFEARMAINAACNERNLNWFESGVSENAVSGHIQFIRPGDTACFACAPPLVVAENIDEKTLKKEGVCAASLPTTMGITAGFLVQNVLKYLLNFGEVSDYLGYNALSDFFPKMTLKPNPQCDDSNCLVRQMEFQAKPKPVVVEEKADNEEPLHATNEWGIELVAENAPEINPTSTETPVVGEGLKLAYEAPEKSSETSEETVTTAPPDDASLEDLMAQMKSM</sequence>
<proteinExistence type="inferred from homology"/>
<name>UBA5_DROER</name>
<reference key="1">
    <citation type="journal article" date="2007" name="Nature">
        <title>Evolution of genes and genomes on the Drosophila phylogeny.</title>
        <authorList>
            <consortium name="Drosophila 12 genomes consortium"/>
        </authorList>
    </citation>
    <scope>NUCLEOTIDE SEQUENCE [LARGE SCALE GENOMIC DNA]</scope>
    <source>
        <strain>Tucson 14021-0224.01</strain>
    </source>
</reference>
<organism>
    <name type="scientific">Drosophila erecta</name>
    <name type="common">Fruit fly</name>
    <dbReference type="NCBI Taxonomy" id="7220"/>
    <lineage>
        <taxon>Eukaryota</taxon>
        <taxon>Metazoa</taxon>
        <taxon>Ecdysozoa</taxon>
        <taxon>Arthropoda</taxon>
        <taxon>Hexapoda</taxon>
        <taxon>Insecta</taxon>
        <taxon>Pterygota</taxon>
        <taxon>Neoptera</taxon>
        <taxon>Endopterygota</taxon>
        <taxon>Diptera</taxon>
        <taxon>Brachycera</taxon>
        <taxon>Muscomorpha</taxon>
        <taxon>Ephydroidea</taxon>
        <taxon>Drosophilidae</taxon>
        <taxon>Drosophila</taxon>
        <taxon>Sophophora</taxon>
    </lineage>
</organism>